<reference key="1">
    <citation type="journal article" date="1998" name="Science">
        <title>Genome sequence of the nematode C. elegans: a platform for investigating biology.</title>
        <authorList>
            <consortium name="The C. elegans sequencing consortium"/>
        </authorList>
    </citation>
    <scope>NUCLEOTIDE SEQUENCE [LARGE SCALE GENOMIC DNA]</scope>
    <source>
        <strain>Bristol N2</strain>
    </source>
</reference>
<reference key="2">
    <citation type="journal article" date="1996" name="Gene">
        <title>The Caenorhabditis elegans gene CeAPN1 encodes a homolog of Escherichia coli and yeast apurinic/apyrimidinic endonuclease.</title>
        <authorList>
            <person name="Masson J.Y."/>
            <person name="Tremblay S."/>
            <person name="Ramotar D."/>
        </authorList>
    </citation>
    <scope>NUCLEOTIDE SEQUENCE [MRNA] OF 104-396</scope>
</reference>
<name>APN1_CAEEL</name>
<sequence length="396" mass="44747">MANKKVTFREDVKSPAIRKLKQKLTPLKIKKGRGKIQKHIQKTLQKMKEEEESENQSPGTTVEETLTEENISTDKEETSKLENKPKKTRKTSGETIAQKKSRETVGVEVLKTSEGSSKMLGFHVSAAGGLEQAIYNARAEGCRSFAMFVRNQRTWNHKPMSEEVVENWWKAVRETNFPLDQIVPHGSYLMNAGSPEAEKLEKSRLAMLDECQRAEKLGITMYNFHPGSTVGKCEKEECMTTIAETIDFVVEKTENIILVLETMAGQGNSIGGTFEELKFIIDKVKVKSRVGVCIDTCHIFAGGYDIRTQKAYEEVMKNFGEVVGWNYLKAIHINDSKGDVGSKLDRHEHIGQGKIGKAAFELLMNDNRLDGIPMILETPEGKYPEEMMIMYNMDKR</sequence>
<protein>
    <recommendedName>
        <fullName>Apurinic-apyrimidinic endonuclease</fullName>
        <shortName>AP endonuclease</shortName>
        <ecNumber>3.1.21.-</ecNumber>
    </recommendedName>
</protein>
<proteinExistence type="evidence at transcript level"/>
<gene>
    <name type="primary">apn-1</name>
    <name type="ORF">T05H10.2</name>
</gene>
<comment type="cofactor">
    <cofactor evidence="1">
        <name>Zn(2+)</name>
        <dbReference type="ChEBI" id="CHEBI:29105"/>
    </cofactor>
    <text evidence="1">Binds 3 Zn(2+) ions.</text>
</comment>
<comment type="subcellular location">
    <subcellularLocation>
        <location evidence="3">Nucleus</location>
    </subcellularLocation>
</comment>
<comment type="similarity">
    <text evidence="3">Belongs to the AP endonuclease 2 family.</text>
</comment>
<keyword id="KW-0227">DNA damage</keyword>
<keyword id="KW-0234">DNA repair</keyword>
<keyword id="KW-0378">Hydrolase</keyword>
<keyword id="KW-0479">Metal-binding</keyword>
<keyword id="KW-0539">Nucleus</keyword>
<keyword id="KW-1185">Reference proteome</keyword>
<keyword id="KW-0862">Zinc</keyword>
<feature type="chain" id="PRO_0000190899" description="Apurinic-apyrimidinic endonuclease">
    <location>
        <begin position="1"/>
        <end position="396"/>
    </location>
</feature>
<feature type="region of interest" description="Disordered" evidence="2">
    <location>
        <begin position="31"/>
        <end position="100"/>
    </location>
</feature>
<feature type="compositionally biased region" description="Basic residues" evidence="2">
    <location>
        <begin position="31"/>
        <end position="41"/>
    </location>
</feature>
<feature type="compositionally biased region" description="Polar residues" evidence="2">
    <location>
        <begin position="55"/>
        <end position="70"/>
    </location>
</feature>
<feature type="compositionally biased region" description="Basic and acidic residues" evidence="2">
    <location>
        <begin position="72"/>
        <end position="85"/>
    </location>
</feature>
<feature type="binding site" evidence="1">
    <location>
        <position position="185"/>
    </location>
    <ligand>
        <name>Zn(2+)</name>
        <dbReference type="ChEBI" id="CHEBI:29105"/>
        <label>1</label>
    </ligand>
</feature>
<feature type="binding site" evidence="1">
    <location>
        <position position="225"/>
    </location>
    <ligand>
        <name>Zn(2+)</name>
        <dbReference type="ChEBI" id="CHEBI:29105"/>
        <label>1</label>
    </ligand>
</feature>
<feature type="binding site" evidence="1">
    <location>
        <position position="261"/>
    </location>
    <ligand>
        <name>Zn(2+)</name>
        <dbReference type="ChEBI" id="CHEBI:29105"/>
        <label>1</label>
    </ligand>
</feature>
<feature type="binding site" evidence="1">
    <location>
        <position position="261"/>
    </location>
    <ligand>
        <name>Zn(2+)</name>
        <dbReference type="ChEBI" id="CHEBI:29105"/>
        <label>2</label>
    </ligand>
</feature>
<feature type="binding site" evidence="1">
    <location>
        <position position="295"/>
    </location>
    <ligand>
        <name>Zn(2+)</name>
        <dbReference type="ChEBI" id="CHEBI:29105"/>
        <label>2</label>
    </ligand>
</feature>
<feature type="binding site" evidence="1">
    <location>
        <position position="298"/>
    </location>
    <ligand>
        <name>Zn(2+)</name>
        <dbReference type="ChEBI" id="CHEBI:29105"/>
        <label>3</label>
    </ligand>
</feature>
<feature type="binding site" evidence="1">
    <location>
        <position position="332"/>
    </location>
    <ligand>
        <name>Zn(2+)</name>
        <dbReference type="ChEBI" id="CHEBI:29105"/>
        <label>2</label>
    </ligand>
</feature>
<feature type="binding site" evidence="1">
    <location>
        <position position="345"/>
    </location>
    <ligand>
        <name>Zn(2+)</name>
        <dbReference type="ChEBI" id="CHEBI:29105"/>
        <label>3</label>
    </ligand>
</feature>
<feature type="binding site" evidence="1">
    <location>
        <position position="347"/>
    </location>
    <ligand>
        <name>Zn(2+)</name>
        <dbReference type="ChEBI" id="CHEBI:29105"/>
        <label>3</label>
    </ligand>
</feature>
<feature type="binding site" evidence="1">
    <location>
        <position position="377"/>
    </location>
    <ligand>
        <name>Zn(2+)</name>
        <dbReference type="ChEBI" id="CHEBI:29105"/>
        <label>2</label>
    </ligand>
</feature>
<accession>Q10002</accession>
<organism>
    <name type="scientific">Caenorhabditis elegans</name>
    <dbReference type="NCBI Taxonomy" id="6239"/>
    <lineage>
        <taxon>Eukaryota</taxon>
        <taxon>Metazoa</taxon>
        <taxon>Ecdysozoa</taxon>
        <taxon>Nematoda</taxon>
        <taxon>Chromadorea</taxon>
        <taxon>Rhabditida</taxon>
        <taxon>Rhabditina</taxon>
        <taxon>Rhabditomorpha</taxon>
        <taxon>Rhabditoidea</taxon>
        <taxon>Rhabditidae</taxon>
        <taxon>Peloderinae</taxon>
        <taxon>Caenorhabditis</taxon>
    </lineage>
</organism>
<evidence type="ECO:0000250" key="1"/>
<evidence type="ECO:0000256" key="2">
    <source>
        <dbReference type="SAM" id="MobiDB-lite"/>
    </source>
</evidence>
<evidence type="ECO:0000305" key="3"/>
<dbReference type="EC" id="3.1.21.-"/>
<dbReference type="EMBL" id="Z47812">
    <property type="protein sequence ID" value="CAA87789.2"/>
    <property type="molecule type" value="Genomic_DNA"/>
</dbReference>
<dbReference type="EMBL" id="U40707">
    <property type="protein sequence ID" value="AAB39924.1"/>
    <property type="molecule type" value="mRNA"/>
</dbReference>
<dbReference type="PIR" id="JC5235">
    <property type="entry name" value="JC5235"/>
</dbReference>
<dbReference type="RefSeq" id="NP_495687.1">
    <property type="nucleotide sequence ID" value="NM_063286.8"/>
</dbReference>
<dbReference type="SMR" id="Q10002"/>
<dbReference type="BioGRID" id="39623">
    <property type="interactions" value="1"/>
</dbReference>
<dbReference type="FunCoup" id="Q10002">
    <property type="interactions" value="446"/>
</dbReference>
<dbReference type="IntAct" id="Q10002">
    <property type="interactions" value="1"/>
</dbReference>
<dbReference type="STRING" id="6239.T05H10.2.2"/>
<dbReference type="PaxDb" id="6239-T05H10.2"/>
<dbReference type="PeptideAtlas" id="Q10002"/>
<dbReference type="EnsemblMetazoa" id="T05H10.2.1">
    <property type="protein sequence ID" value="T05H10.2.1"/>
    <property type="gene ID" value="WBGene00000151"/>
</dbReference>
<dbReference type="GeneID" id="174291"/>
<dbReference type="KEGG" id="cel:CELE_T05H10.2"/>
<dbReference type="UCSC" id="T05H10.2">
    <property type="organism name" value="c. elegans"/>
</dbReference>
<dbReference type="AGR" id="WB:WBGene00000151"/>
<dbReference type="CTD" id="174291"/>
<dbReference type="WormBase" id="T05H10.2">
    <property type="protein sequence ID" value="CE28953"/>
    <property type="gene ID" value="WBGene00000151"/>
    <property type="gene designation" value="apn-1"/>
</dbReference>
<dbReference type="eggNOG" id="KOG3997">
    <property type="taxonomic scope" value="Eukaryota"/>
</dbReference>
<dbReference type="GeneTree" id="ENSGT00390000013698"/>
<dbReference type="HOGENOM" id="CLU_025885_0_0_1"/>
<dbReference type="InParanoid" id="Q10002"/>
<dbReference type="OMA" id="NPRGWAT"/>
<dbReference type="OrthoDB" id="7663182at2759"/>
<dbReference type="PhylomeDB" id="Q10002"/>
<dbReference type="PRO" id="PR:Q10002"/>
<dbReference type="Proteomes" id="UP000001940">
    <property type="component" value="Chromosome II"/>
</dbReference>
<dbReference type="Bgee" id="WBGene00000151">
    <property type="expression patterns" value="Expressed in germ line (C elegans) and 7 other cell types or tissues"/>
</dbReference>
<dbReference type="GO" id="GO:0005739">
    <property type="term" value="C:mitochondrion"/>
    <property type="evidence" value="ECO:0000318"/>
    <property type="project" value="GO_Central"/>
</dbReference>
<dbReference type="GO" id="GO:0005634">
    <property type="term" value="C:nucleus"/>
    <property type="evidence" value="ECO:0000314"/>
    <property type="project" value="WormBase"/>
</dbReference>
<dbReference type="GO" id="GO:0017005">
    <property type="term" value="F:3'-tyrosyl-DNA phosphodiesterase activity"/>
    <property type="evidence" value="ECO:0000314"/>
    <property type="project" value="CACAO"/>
</dbReference>
<dbReference type="GO" id="GO:0003677">
    <property type="term" value="F:DNA binding"/>
    <property type="evidence" value="ECO:0007669"/>
    <property type="project" value="InterPro"/>
</dbReference>
<dbReference type="GO" id="GO:0003906">
    <property type="term" value="F:DNA-(apurinic or apyrimidinic site) endonuclease activity"/>
    <property type="evidence" value="ECO:0000314"/>
    <property type="project" value="WormBase"/>
</dbReference>
<dbReference type="GO" id="GO:0008311">
    <property type="term" value="F:double-stranded DNA 3'-5' DNA exonuclease activity"/>
    <property type="evidence" value="ECO:0000314"/>
    <property type="project" value="CACAO"/>
</dbReference>
<dbReference type="GO" id="GO:0008081">
    <property type="term" value="F:phosphoric diester hydrolase activity"/>
    <property type="evidence" value="ECO:0000314"/>
    <property type="project" value="WormBase"/>
</dbReference>
<dbReference type="GO" id="GO:0008270">
    <property type="term" value="F:zinc ion binding"/>
    <property type="evidence" value="ECO:0007669"/>
    <property type="project" value="InterPro"/>
</dbReference>
<dbReference type="GO" id="GO:0006284">
    <property type="term" value="P:base-excision repair"/>
    <property type="evidence" value="ECO:0000314"/>
    <property type="project" value="WormBase"/>
</dbReference>
<dbReference type="CDD" id="cd00019">
    <property type="entry name" value="AP2Ec"/>
    <property type="match status" value="1"/>
</dbReference>
<dbReference type="FunFam" id="3.20.20.150:FF:000001">
    <property type="entry name" value="Probable endonuclease 4"/>
    <property type="match status" value="1"/>
</dbReference>
<dbReference type="Gene3D" id="3.20.20.150">
    <property type="entry name" value="Divalent-metal-dependent TIM barrel enzymes"/>
    <property type="match status" value="1"/>
</dbReference>
<dbReference type="HAMAP" id="MF_00152">
    <property type="entry name" value="Nfo"/>
    <property type="match status" value="1"/>
</dbReference>
<dbReference type="InterPro" id="IPR001719">
    <property type="entry name" value="AP_endonuc_2"/>
</dbReference>
<dbReference type="InterPro" id="IPR018246">
    <property type="entry name" value="AP_endonuc_F2_Zn_BS"/>
</dbReference>
<dbReference type="InterPro" id="IPR036237">
    <property type="entry name" value="Xyl_isomerase-like_sf"/>
</dbReference>
<dbReference type="InterPro" id="IPR013022">
    <property type="entry name" value="Xyl_isomerase-like_TIM-brl"/>
</dbReference>
<dbReference type="NCBIfam" id="TIGR00587">
    <property type="entry name" value="nfo"/>
    <property type="match status" value="1"/>
</dbReference>
<dbReference type="NCBIfam" id="NF002199">
    <property type="entry name" value="PRK01060.1-4"/>
    <property type="match status" value="1"/>
</dbReference>
<dbReference type="PANTHER" id="PTHR21445:SF0">
    <property type="entry name" value="APURINIC-APYRIMIDINIC ENDONUCLEASE"/>
    <property type="match status" value="1"/>
</dbReference>
<dbReference type="PANTHER" id="PTHR21445">
    <property type="entry name" value="ENDONUCLEASE IV ENDODEOXYRIBONUCLEASE IV"/>
    <property type="match status" value="1"/>
</dbReference>
<dbReference type="Pfam" id="PF01261">
    <property type="entry name" value="AP_endonuc_2"/>
    <property type="match status" value="1"/>
</dbReference>
<dbReference type="SMART" id="SM00518">
    <property type="entry name" value="AP2Ec"/>
    <property type="match status" value="1"/>
</dbReference>
<dbReference type="SUPFAM" id="SSF51658">
    <property type="entry name" value="Xylose isomerase-like"/>
    <property type="match status" value="1"/>
</dbReference>
<dbReference type="PROSITE" id="PS00729">
    <property type="entry name" value="AP_NUCLEASE_F2_1"/>
    <property type="match status" value="1"/>
</dbReference>
<dbReference type="PROSITE" id="PS00730">
    <property type="entry name" value="AP_NUCLEASE_F2_2"/>
    <property type="match status" value="1"/>
</dbReference>
<dbReference type="PROSITE" id="PS00731">
    <property type="entry name" value="AP_NUCLEASE_F2_3"/>
    <property type="match status" value="1"/>
</dbReference>
<dbReference type="PROSITE" id="PS51432">
    <property type="entry name" value="AP_NUCLEASE_F2_4"/>
    <property type="match status" value="1"/>
</dbReference>